<dbReference type="EMBL" id="AP006627">
    <property type="protein sequence ID" value="BAD62705.1"/>
    <property type="molecule type" value="Genomic_DNA"/>
</dbReference>
<dbReference type="RefSeq" id="WP_011245026.1">
    <property type="nucleotide sequence ID" value="NC_006582.1"/>
</dbReference>
<dbReference type="SMR" id="Q5WLQ0"/>
<dbReference type="STRING" id="66692.ABC0162"/>
<dbReference type="GeneID" id="86924198"/>
<dbReference type="KEGG" id="bcl:ABC0162"/>
<dbReference type="eggNOG" id="COG0094">
    <property type="taxonomic scope" value="Bacteria"/>
</dbReference>
<dbReference type="HOGENOM" id="CLU_061015_2_1_9"/>
<dbReference type="OrthoDB" id="9806626at2"/>
<dbReference type="Proteomes" id="UP000001168">
    <property type="component" value="Chromosome"/>
</dbReference>
<dbReference type="GO" id="GO:1990904">
    <property type="term" value="C:ribonucleoprotein complex"/>
    <property type="evidence" value="ECO:0007669"/>
    <property type="project" value="UniProtKB-KW"/>
</dbReference>
<dbReference type="GO" id="GO:0005840">
    <property type="term" value="C:ribosome"/>
    <property type="evidence" value="ECO:0007669"/>
    <property type="project" value="UniProtKB-KW"/>
</dbReference>
<dbReference type="GO" id="GO:0019843">
    <property type="term" value="F:rRNA binding"/>
    <property type="evidence" value="ECO:0007669"/>
    <property type="project" value="UniProtKB-UniRule"/>
</dbReference>
<dbReference type="GO" id="GO:0003735">
    <property type="term" value="F:structural constituent of ribosome"/>
    <property type="evidence" value="ECO:0007669"/>
    <property type="project" value="InterPro"/>
</dbReference>
<dbReference type="GO" id="GO:0000049">
    <property type="term" value="F:tRNA binding"/>
    <property type="evidence" value="ECO:0007669"/>
    <property type="project" value="UniProtKB-UniRule"/>
</dbReference>
<dbReference type="GO" id="GO:0006412">
    <property type="term" value="P:translation"/>
    <property type="evidence" value="ECO:0007669"/>
    <property type="project" value="UniProtKB-UniRule"/>
</dbReference>
<dbReference type="FunFam" id="3.30.1440.10:FF:000001">
    <property type="entry name" value="50S ribosomal protein L5"/>
    <property type="match status" value="1"/>
</dbReference>
<dbReference type="Gene3D" id="3.30.1440.10">
    <property type="match status" value="1"/>
</dbReference>
<dbReference type="HAMAP" id="MF_01333_B">
    <property type="entry name" value="Ribosomal_uL5_B"/>
    <property type="match status" value="1"/>
</dbReference>
<dbReference type="InterPro" id="IPR002132">
    <property type="entry name" value="Ribosomal_uL5"/>
</dbReference>
<dbReference type="InterPro" id="IPR020930">
    <property type="entry name" value="Ribosomal_uL5_bac-type"/>
</dbReference>
<dbReference type="InterPro" id="IPR031309">
    <property type="entry name" value="Ribosomal_uL5_C"/>
</dbReference>
<dbReference type="InterPro" id="IPR020929">
    <property type="entry name" value="Ribosomal_uL5_CS"/>
</dbReference>
<dbReference type="InterPro" id="IPR022803">
    <property type="entry name" value="Ribosomal_uL5_dom_sf"/>
</dbReference>
<dbReference type="InterPro" id="IPR031310">
    <property type="entry name" value="Ribosomal_uL5_N"/>
</dbReference>
<dbReference type="NCBIfam" id="NF000585">
    <property type="entry name" value="PRK00010.1"/>
    <property type="match status" value="1"/>
</dbReference>
<dbReference type="PANTHER" id="PTHR11994">
    <property type="entry name" value="60S RIBOSOMAL PROTEIN L11-RELATED"/>
    <property type="match status" value="1"/>
</dbReference>
<dbReference type="Pfam" id="PF00281">
    <property type="entry name" value="Ribosomal_L5"/>
    <property type="match status" value="1"/>
</dbReference>
<dbReference type="Pfam" id="PF00673">
    <property type="entry name" value="Ribosomal_L5_C"/>
    <property type="match status" value="1"/>
</dbReference>
<dbReference type="PIRSF" id="PIRSF002161">
    <property type="entry name" value="Ribosomal_L5"/>
    <property type="match status" value="1"/>
</dbReference>
<dbReference type="SUPFAM" id="SSF55282">
    <property type="entry name" value="RL5-like"/>
    <property type="match status" value="1"/>
</dbReference>
<dbReference type="PROSITE" id="PS00358">
    <property type="entry name" value="RIBOSOMAL_L5"/>
    <property type="match status" value="1"/>
</dbReference>
<protein>
    <recommendedName>
        <fullName evidence="1">Large ribosomal subunit protein uL5</fullName>
    </recommendedName>
    <alternativeName>
        <fullName evidence="2">50S ribosomal protein L5</fullName>
    </alternativeName>
</protein>
<evidence type="ECO:0000255" key="1">
    <source>
        <dbReference type="HAMAP-Rule" id="MF_01333"/>
    </source>
</evidence>
<evidence type="ECO:0000305" key="2"/>
<comment type="function">
    <text evidence="1">This is one of the proteins that bind and probably mediate the attachment of the 5S RNA into the large ribosomal subunit, where it forms part of the central protuberance. In the 70S ribosome it contacts protein S13 of the 30S subunit (bridge B1b), connecting the 2 subunits; this bridge is implicated in subunit movement. Contacts the P site tRNA; the 5S rRNA and some of its associated proteins might help stabilize positioning of ribosome-bound tRNAs.</text>
</comment>
<comment type="subunit">
    <text evidence="1">Part of the 50S ribosomal subunit; part of the 5S rRNA/L5/L18/L25 subcomplex. Contacts the 5S rRNA and the P site tRNA. Forms a bridge to the 30S subunit in the 70S ribosome.</text>
</comment>
<comment type="similarity">
    <text evidence="1">Belongs to the universal ribosomal protein uL5 family.</text>
</comment>
<feature type="chain" id="PRO_0000242966" description="Large ribosomal subunit protein uL5">
    <location>
        <begin position="1"/>
        <end position="179"/>
    </location>
</feature>
<organism>
    <name type="scientific">Shouchella clausii (strain KSM-K16)</name>
    <name type="common">Alkalihalobacillus clausii</name>
    <dbReference type="NCBI Taxonomy" id="66692"/>
    <lineage>
        <taxon>Bacteria</taxon>
        <taxon>Bacillati</taxon>
        <taxon>Bacillota</taxon>
        <taxon>Bacilli</taxon>
        <taxon>Bacillales</taxon>
        <taxon>Bacillaceae</taxon>
        <taxon>Shouchella</taxon>
    </lineage>
</organism>
<reference key="1">
    <citation type="submission" date="2003-10" db="EMBL/GenBank/DDBJ databases">
        <title>The complete genome sequence of the alkaliphilic Bacillus clausii KSM-K16.</title>
        <authorList>
            <person name="Takaki Y."/>
            <person name="Kageyama Y."/>
            <person name="Shimamura S."/>
            <person name="Suzuki H."/>
            <person name="Nishi S."/>
            <person name="Hatada Y."/>
            <person name="Kawai S."/>
            <person name="Ito S."/>
            <person name="Horikoshi K."/>
        </authorList>
    </citation>
    <scope>NUCLEOTIDE SEQUENCE [LARGE SCALE GENOMIC DNA]</scope>
    <source>
        <strain>KSM-K16</strain>
    </source>
</reference>
<keyword id="KW-1185">Reference proteome</keyword>
<keyword id="KW-0687">Ribonucleoprotein</keyword>
<keyword id="KW-0689">Ribosomal protein</keyword>
<keyword id="KW-0694">RNA-binding</keyword>
<keyword id="KW-0699">rRNA-binding</keyword>
<keyword id="KW-0820">tRNA-binding</keyword>
<proteinExistence type="inferred from homology"/>
<name>RL5_SHOC1</name>
<sequence>MNRLKEKYQNEIVSSLTEKFNYPSVMAVPKIEKIVVNMGIGDAVQNAKVLDKAVEELQAITGQKPVITKAKKSIAGFKLREGMPIGAKVTLRGERMYDFLDKLVSVSLPRVRDFRGVSKKAFDGRGNYTLGVREQLIFPEIDYDKVDKVRGMDIVIVTTAKTDEEARELLTQVGMPFQK</sequence>
<gene>
    <name evidence="1" type="primary">rplE</name>
    <name type="ordered locus">ABC0162</name>
</gene>
<accession>Q5WLQ0</accession>